<sequence length="453" mass="50102">MAKFEAHLKCSFCGKSQEQVRKLIAGPGVYICDECIDLCNEILDEELIDNQTKTREANNPSNKNHTAITSTSKPAPTLATIPKPIDIKDFLDKQVVGQEVAKKILSVAVYNHYKRLAWQGDGNQETDLTATRLHKSNILLIGPTGSGKTLLAQTLAELLDVPFAVADATTLTEAGYVGEDVENILLRLLQKADMDIELAQRGIIYIDEIDKIARKSENPSITRDVSGEGVQQALLKMLEGTVANVPPQGGRKHPYHDCIQIDTSQILFICGGAFVGLEDIVQKRLGKNSIGFMPTDSRGQNHLNRDLDNNQMINNLEPDDLIRYGLIPEFIGRMPVTAVLEPLNSEALEAILKEPRDAVIKQFRTLMSMDNVKLEFDEGAVTAIAQEAFRRKTGARALRGIVEELMVDLMYKLPSEKNVSDFTVTKKMVDEMIIGGKVLKLPSNEKIDHPESA</sequence>
<name>CLPX_PROM4</name>
<dbReference type="EMBL" id="CP000878">
    <property type="protein sequence ID" value="ABX09714.1"/>
    <property type="molecule type" value="Genomic_DNA"/>
</dbReference>
<dbReference type="RefSeq" id="WP_012196334.1">
    <property type="nucleotide sequence ID" value="NC_009976.1"/>
</dbReference>
<dbReference type="SMR" id="A9BDA1"/>
<dbReference type="STRING" id="93059.P9211_17831"/>
<dbReference type="KEGG" id="pmj:P9211_17831"/>
<dbReference type="eggNOG" id="COG1219">
    <property type="taxonomic scope" value="Bacteria"/>
</dbReference>
<dbReference type="HOGENOM" id="CLU_014218_8_2_3"/>
<dbReference type="OrthoDB" id="9804062at2"/>
<dbReference type="Proteomes" id="UP000000788">
    <property type="component" value="Chromosome"/>
</dbReference>
<dbReference type="GO" id="GO:0009376">
    <property type="term" value="C:HslUV protease complex"/>
    <property type="evidence" value="ECO:0007669"/>
    <property type="project" value="TreeGrafter"/>
</dbReference>
<dbReference type="GO" id="GO:0005524">
    <property type="term" value="F:ATP binding"/>
    <property type="evidence" value="ECO:0007669"/>
    <property type="project" value="UniProtKB-UniRule"/>
</dbReference>
<dbReference type="GO" id="GO:0016887">
    <property type="term" value="F:ATP hydrolysis activity"/>
    <property type="evidence" value="ECO:0007669"/>
    <property type="project" value="InterPro"/>
</dbReference>
<dbReference type="GO" id="GO:0140662">
    <property type="term" value="F:ATP-dependent protein folding chaperone"/>
    <property type="evidence" value="ECO:0007669"/>
    <property type="project" value="InterPro"/>
</dbReference>
<dbReference type="GO" id="GO:0046983">
    <property type="term" value="F:protein dimerization activity"/>
    <property type="evidence" value="ECO:0007669"/>
    <property type="project" value="InterPro"/>
</dbReference>
<dbReference type="GO" id="GO:0051082">
    <property type="term" value="F:unfolded protein binding"/>
    <property type="evidence" value="ECO:0007669"/>
    <property type="project" value="UniProtKB-UniRule"/>
</dbReference>
<dbReference type="GO" id="GO:0008270">
    <property type="term" value="F:zinc ion binding"/>
    <property type="evidence" value="ECO:0007669"/>
    <property type="project" value="InterPro"/>
</dbReference>
<dbReference type="GO" id="GO:0051301">
    <property type="term" value="P:cell division"/>
    <property type="evidence" value="ECO:0007669"/>
    <property type="project" value="TreeGrafter"/>
</dbReference>
<dbReference type="GO" id="GO:0051603">
    <property type="term" value="P:proteolysis involved in protein catabolic process"/>
    <property type="evidence" value="ECO:0007669"/>
    <property type="project" value="TreeGrafter"/>
</dbReference>
<dbReference type="CDD" id="cd19497">
    <property type="entry name" value="RecA-like_ClpX"/>
    <property type="match status" value="1"/>
</dbReference>
<dbReference type="FunFam" id="1.10.8.60:FF:000002">
    <property type="entry name" value="ATP-dependent Clp protease ATP-binding subunit ClpX"/>
    <property type="match status" value="1"/>
</dbReference>
<dbReference type="FunFam" id="3.40.50.300:FF:000005">
    <property type="entry name" value="ATP-dependent Clp protease ATP-binding subunit ClpX"/>
    <property type="match status" value="1"/>
</dbReference>
<dbReference type="Gene3D" id="1.10.8.60">
    <property type="match status" value="1"/>
</dbReference>
<dbReference type="Gene3D" id="6.20.220.10">
    <property type="entry name" value="ClpX chaperone, C4-type zinc finger domain"/>
    <property type="match status" value="1"/>
</dbReference>
<dbReference type="Gene3D" id="3.40.50.300">
    <property type="entry name" value="P-loop containing nucleotide triphosphate hydrolases"/>
    <property type="match status" value="1"/>
</dbReference>
<dbReference type="HAMAP" id="MF_00175">
    <property type="entry name" value="ClpX"/>
    <property type="match status" value="1"/>
</dbReference>
<dbReference type="InterPro" id="IPR003593">
    <property type="entry name" value="AAA+_ATPase"/>
</dbReference>
<dbReference type="InterPro" id="IPR050052">
    <property type="entry name" value="ATP-dep_Clp_protease_ClpX"/>
</dbReference>
<dbReference type="InterPro" id="IPR003959">
    <property type="entry name" value="ATPase_AAA_core"/>
</dbReference>
<dbReference type="InterPro" id="IPR019489">
    <property type="entry name" value="Clp_ATPase_C"/>
</dbReference>
<dbReference type="InterPro" id="IPR004487">
    <property type="entry name" value="Clp_protease_ATP-bd_su_ClpX"/>
</dbReference>
<dbReference type="InterPro" id="IPR046425">
    <property type="entry name" value="ClpX_bact"/>
</dbReference>
<dbReference type="InterPro" id="IPR027417">
    <property type="entry name" value="P-loop_NTPase"/>
</dbReference>
<dbReference type="InterPro" id="IPR010603">
    <property type="entry name" value="Znf_CppX_C4"/>
</dbReference>
<dbReference type="InterPro" id="IPR038366">
    <property type="entry name" value="Znf_CppX_C4_sf"/>
</dbReference>
<dbReference type="NCBIfam" id="TIGR00382">
    <property type="entry name" value="clpX"/>
    <property type="match status" value="1"/>
</dbReference>
<dbReference type="NCBIfam" id="NF003745">
    <property type="entry name" value="PRK05342.1"/>
    <property type="match status" value="1"/>
</dbReference>
<dbReference type="PANTHER" id="PTHR48102:SF7">
    <property type="entry name" value="ATP-DEPENDENT CLP PROTEASE ATP-BINDING SUBUNIT CLPX-LIKE, MITOCHONDRIAL"/>
    <property type="match status" value="1"/>
</dbReference>
<dbReference type="PANTHER" id="PTHR48102">
    <property type="entry name" value="ATP-DEPENDENT CLP PROTEASE ATP-BINDING SUBUNIT CLPX-LIKE, MITOCHONDRIAL-RELATED"/>
    <property type="match status" value="1"/>
</dbReference>
<dbReference type="Pfam" id="PF07724">
    <property type="entry name" value="AAA_2"/>
    <property type="match status" value="1"/>
</dbReference>
<dbReference type="Pfam" id="PF10431">
    <property type="entry name" value="ClpB_D2-small"/>
    <property type="match status" value="1"/>
</dbReference>
<dbReference type="Pfam" id="PF06689">
    <property type="entry name" value="zf-C4_ClpX"/>
    <property type="match status" value="1"/>
</dbReference>
<dbReference type="SMART" id="SM00382">
    <property type="entry name" value="AAA"/>
    <property type="match status" value="1"/>
</dbReference>
<dbReference type="SMART" id="SM01086">
    <property type="entry name" value="ClpB_D2-small"/>
    <property type="match status" value="1"/>
</dbReference>
<dbReference type="SMART" id="SM00994">
    <property type="entry name" value="zf-C4_ClpX"/>
    <property type="match status" value="1"/>
</dbReference>
<dbReference type="SUPFAM" id="SSF57716">
    <property type="entry name" value="Glucocorticoid receptor-like (DNA-binding domain)"/>
    <property type="match status" value="1"/>
</dbReference>
<dbReference type="SUPFAM" id="SSF52540">
    <property type="entry name" value="P-loop containing nucleoside triphosphate hydrolases"/>
    <property type="match status" value="1"/>
</dbReference>
<dbReference type="PROSITE" id="PS51902">
    <property type="entry name" value="CLPX_ZB"/>
    <property type="match status" value="1"/>
</dbReference>
<comment type="function">
    <text evidence="1">ATP-dependent specificity component of the Clp protease. It directs the protease to specific substrates. Can perform chaperone functions in the absence of ClpP.</text>
</comment>
<comment type="subunit">
    <text evidence="1">Component of the ClpX-ClpP complex. Forms a hexameric ring that, in the presence of ATP, binds to fourteen ClpP subunits assembled into a disk-like structure with a central cavity, resembling the structure of eukaryotic proteasomes.</text>
</comment>
<comment type="similarity">
    <text evidence="1">Belongs to the ClpX chaperone family.</text>
</comment>
<reference key="1">
    <citation type="journal article" date="2007" name="PLoS Genet.">
        <title>Patterns and implications of gene gain and loss in the evolution of Prochlorococcus.</title>
        <authorList>
            <person name="Kettler G.C."/>
            <person name="Martiny A.C."/>
            <person name="Huang K."/>
            <person name="Zucker J."/>
            <person name="Coleman M.L."/>
            <person name="Rodrigue S."/>
            <person name="Chen F."/>
            <person name="Lapidus A."/>
            <person name="Ferriera S."/>
            <person name="Johnson J."/>
            <person name="Steglich C."/>
            <person name="Church G.M."/>
            <person name="Richardson P."/>
            <person name="Chisholm S.W."/>
        </authorList>
    </citation>
    <scope>NUCLEOTIDE SEQUENCE [LARGE SCALE GENOMIC DNA]</scope>
    <source>
        <strain>MIT 9211</strain>
    </source>
</reference>
<keyword id="KW-0067">ATP-binding</keyword>
<keyword id="KW-0143">Chaperone</keyword>
<keyword id="KW-0479">Metal-binding</keyword>
<keyword id="KW-0547">Nucleotide-binding</keyword>
<keyword id="KW-1185">Reference proteome</keyword>
<keyword id="KW-0862">Zinc</keyword>
<organism>
    <name type="scientific">Prochlorococcus marinus (strain MIT 9211)</name>
    <dbReference type="NCBI Taxonomy" id="93059"/>
    <lineage>
        <taxon>Bacteria</taxon>
        <taxon>Bacillati</taxon>
        <taxon>Cyanobacteriota</taxon>
        <taxon>Cyanophyceae</taxon>
        <taxon>Synechococcales</taxon>
        <taxon>Prochlorococcaceae</taxon>
        <taxon>Prochlorococcus</taxon>
    </lineage>
</organism>
<evidence type="ECO:0000255" key="1">
    <source>
        <dbReference type="HAMAP-Rule" id="MF_00175"/>
    </source>
</evidence>
<evidence type="ECO:0000255" key="2">
    <source>
        <dbReference type="PROSITE-ProRule" id="PRU01250"/>
    </source>
</evidence>
<evidence type="ECO:0000256" key="3">
    <source>
        <dbReference type="SAM" id="MobiDB-lite"/>
    </source>
</evidence>
<protein>
    <recommendedName>
        <fullName evidence="1">ATP-dependent Clp protease ATP-binding subunit ClpX</fullName>
    </recommendedName>
</protein>
<gene>
    <name evidence="1" type="primary">clpX</name>
    <name type="ordered locus">P9211_17831</name>
</gene>
<feature type="chain" id="PRO_1000097983" description="ATP-dependent Clp protease ATP-binding subunit ClpX">
    <location>
        <begin position="1"/>
        <end position="453"/>
    </location>
</feature>
<feature type="domain" description="ClpX-type ZB" evidence="2">
    <location>
        <begin position="1"/>
        <end position="51"/>
    </location>
</feature>
<feature type="region of interest" description="Disordered" evidence="3">
    <location>
        <begin position="53"/>
        <end position="77"/>
    </location>
</feature>
<feature type="compositionally biased region" description="Polar residues" evidence="3">
    <location>
        <begin position="57"/>
        <end position="74"/>
    </location>
</feature>
<feature type="binding site" evidence="2">
    <location>
        <position position="10"/>
    </location>
    <ligand>
        <name>Zn(2+)</name>
        <dbReference type="ChEBI" id="CHEBI:29105"/>
    </ligand>
</feature>
<feature type="binding site" evidence="2">
    <location>
        <position position="13"/>
    </location>
    <ligand>
        <name>Zn(2+)</name>
        <dbReference type="ChEBI" id="CHEBI:29105"/>
    </ligand>
</feature>
<feature type="binding site" evidence="2">
    <location>
        <position position="32"/>
    </location>
    <ligand>
        <name>Zn(2+)</name>
        <dbReference type="ChEBI" id="CHEBI:29105"/>
    </ligand>
</feature>
<feature type="binding site" evidence="2">
    <location>
        <position position="35"/>
    </location>
    <ligand>
        <name>Zn(2+)</name>
        <dbReference type="ChEBI" id="CHEBI:29105"/>
    </ligand>
</feature>
<feature type="binding site" evidence="1">
    <location>
        <begin position="143"/>
        <end position="150"/>
    </location>
    <ligand>
        <name>ATP</name>
        <dbReference type="ChEBI" id="CHEBI:30616"/>
    </ligand>
</feature>
<proteinExistence type="inferred from homology"/>
<accession>A9BDA1</accession>